<feature type="peptide" id="PRO_0000419715" description="Allatostatin-C1">
    <location>
        <begin position="1"/>
        <end position="15"/>
    </location>
</feature>
<feature type="modified residue" description="Pyrrolidone carboxylic acid" evidence="3">
    <location>
        <position position="1"/>
    </location>
</feature>
<feature type="disulfide bond" evidence="3">
    <location>
        <begin position="7"/>
        <end position="14"/>
    </location>
</feature>
<feature type="unsure residue" description="I or L" evidence="3">
    <location>
        <position position="12"/>
    </location>
</feature>
<name>ALLC1_DELRA</name>
<dbReference type="GO" id="GO:0005576">
    <property type="term" value="C:extracellular region"/>
    <property type="evidence" value="ECO:0007669"/>
    <property type="project" value="UniProtKB-SubCell"/>
</dbReference>
<dbReference type="GO" id="GO:0007218">
    <property type="term" value="P:neuropeptide signaling pathway"/>
    <property type="evidence" value="ECO:0007669"/>
    <property type="project" value="UniProtKB-KW"/>
</dbReference>
<keyword id="KW-0903">Direct protein sequencing</keyword>
<keyword id="KW-1015">Disulfide bond</keyword>
<keyword id="KW-0527">Neuropeptide</keyword>
<keyword id="KW-0873">Pyrrolidone carboxylic acid</keyword>
<keyword id="KW-0964">Secreted</keyword>
<protein>
    <recommendedName>
        <fullName>Allatostatin-C1</fullName>
        <shortName>AST-C1</shortName>
    </recommendedName>
</protein>
<evidence type="ECO:0000250" key="1">
    <source>
        <dbReference type="UniProtKB" id="P42559"/>
    </source>
</evidence>
<evidence type="ECO:0000255" key="2"/>
<evidence type="ECO:0000269" key="3">
    <source>
    </source>
</evidence>
<evidence type="ECO:0000305" key="4"/>
<comment type="function">
    <text evidence="1">Strongly inhibits juvenile hormone biosynthesis. May act as a neurotransmitter or neuromodulator (By similarity).</text>
</comment>
<comment type="subcellular location">
    <subcellularLocation>
        <location evidence="1">Secreted</location>
    </subcellularLocation>
</comment>
<comment type="tissue specificity">
    <text evidence="3">Expressed in the CNS and midgut but not in the ring gland, thoracic perisymapthetic organs (tPSO) or abdominal perisymapthetic organs (aPSO) (at protein level).</text>
</comment>
<comment type="developmental stage">
    <text evidence="3">Detected in larvae.</text>
</comment>
<comment type="mass spectrometry"/>
<comment type="similarity">
    <text evidence="2">Belongs to the allatostatin family.</text>
</comment>
<organism>
    <name type="scientific">Delia radicum</name>
    <name type="common">Cabbage root fly</name>
    <name type="synonym">Anthomyia brassicae</name>
    <dbReference type="NCBI Taxonomy" id="30064"/>
    <lineage>
        <taxon>Eukaryota</taxon>
        <taxon>Metazoa</taxon>
        <taxon>Ecdysozoa</taxon>
        <taxon>Arthropoda</taxon>
        <taxon>Hexapoda</taxon>
        <taxon>Insecta</taxon>
        <taxon>Pterygota</taxon>
        <taxon>Neoptera</taxon>
        <taxon>Endopterygota</taxon>
        <taxon>Diptera</taxon>
        <taxon>Brachycera</taxon>
        <taxon>Muscomorpha</taxon>
        <taxon>Muscoidea</taxon>
        <taxon>Anthomyiidae</taxon>
        <taxon>Anthomyiinae</taxon>
        <taxon>Delia</taxon>
    </lineage>
</organism>
<reference evidence="4" key="1">
    <citation type="journal article" date="2012" name="PLoS ONE">
        <title>Peptidomics of the agriculturally damaging larval stage of the cabbage root fly Delia radicum (Diptera: Anthomyiidae).</title>
        <authorList>
            <person name="Zoephel J."/>
            <person name="Reiher W."/>
            <person name="Rexer K.-H."/>
            <person name="Kahnt J."/>
            <person name="Wegener C."/>
        </authorList>
    </citation>
    <scope>PROTEIN SEQUENCE</scope>
    <scope>TISSUE SPECIFICITY</scope>
    <scope>DEVELOPMENTAL STAGE</scope>
    <scope>PYROGLUTAMATE FORMATION AT GLN-1</scope>
    <scope>MASS SPECTROMETRY</scope>
    <source>
        <tissue evidence="3">CNS</tissue>
        <tissue evidence="3">Midgut</tissue>
    </source>
</reference>
<sequence>QVRYRQCYFNPISCF</sequence>
<accession>B3EWJ5</accession>
<proteinExistence type="evidence at protein level"/>